<protein>
    <recommendedName>
        <fullName>Probable alginate O-acetylase AlgJ</fullName>
        <ecNumber>2.3.1.-</ecNumber>
    </recommendedName>
    <alternativeName>
        <fullName>Alginate biosynthesis protein AlgJ</fullName>
    </alternativeName>
</protein>
<name>ALGJ_PSEFL</name>
<dbReference type="EC" id="2.3.1.-"/>
<dbReference type="EMBL" id="AF527790">
    <property type="protein sequence ID" value="AAP46698.1"/>
    <property type="molecule type" value="Genomic_DNA"/>
</dbReference>
<dbReference type="SMR" id="P59792"/>
<dbReference type="eggNOG" id="ENOG502Z851">
    <property type="taxonomic scope" value="Bacteria"/>
</dbReference>
<dbReference type="UniPathway" id="UPA00286"/>
<dbReference type="GO" id="GO:0042597">
    <property type="term" value="C:periplasmic space"/>
    <property type="evidence" value="ECO:0007669"/>
    <property type="project" value="UniProtKB-SubCell"/>
</dbReference>
<dbReference type="GO" id="GO:0005886">
    <property type="term" value="C:plasma membrane"/>
    <property type="evidence" value="ECO:0007669"/>
    <property type="project" value="UniProtKB-SubCell"/>
</dbReference>
<dbReference type="GO" id="GO:0016746">
    <property type="term" value="F:acyltransferase activity"/>
    <property type="evidence" value="ECO:0007669"/>
    <property type="project" value="UniProtKB-KW"/>
</dbReference>
<dbReference type="GO" id="GO:0042121">
    <property type="term" value="P:alginic acid biosynthetic process"/>
    <property type="evidence" value="ECO:0007669"/>
    <property type="project" value="UniProtKB-UniPathway"/>
</dbReference>
<dbReference type="CDD" id="cd14442">
    <property type="entry name" value="AlgJ_like"/>
    <property type="match status" value="1"/>
</dbReference>
<dbReference type="InterPro" id="IPR034657">
    <property type="entry name" value="AlgJ"/>
</dbReference>
<dbReference type="InterPro" id="IPR031811">
    <property type="entry name" value="ALGX/ALGJ_SGNH-like"/>
</dbReference>
<dbReference type="Pfam" id="PF16822">
    <property type="entry name" value="ALGX"/>
    <property type="match status" value="1"/>
</dbReference>
<evidence type="ECO:0000250" key="1"/>
<evidence type="ECO:0000255" key="2"/>
<evidence type="ECO:0000305" key="3"/>
<keyword id="KW-0012">Acyltransferase</keyword>
<keyword id="KW-0016">Alginate biosynthesis</keyword>
<keyword id="KW-0997">Cell inner membrane</keyword>
<keyword id="KW-1003">Cell membrane</keyword>
<keyword id="KW-0472">Membrane</keyword>
<keyword id="KW-0574">Periplasm</keyword>
<keyword id="KW-0732">Signal</keyword>
<keyword id="KW-0808">Transferase</keyword>
<accession>P59792</accession>
<organism>
    <name type="scientific">Pseudomonas fluorescens</name>
    <dbReference type="NCBI Taxonomy" id="294"/>
    <lineage>
        <taxon>Bacteria</taxon>
        <taxon>Pseudomonadati</taxon>
        <taxon>Pseudomonadota</taxon>
        <taxon>Gammaproteobacteria</taxon>
        <taxon>Pseudomonadales</taxon>
        <taxon>Pseudomonadaceae</taxon>
        <taxon>Pseudomonas</taxon>
    </lineage>
</organism>
<feature type="signal peptide" evidence="2">
    <location>
        <begin position="1"/>
        <end position="37"/>
    </location>
</feature>
<feature type="chain" id="PRO_0000001121" description="Probable alginate O-acetylase AlgJ">
    <location>
        <begin position="38"/>
        <end position="394"/>
    </location>
</feature>
<feature type="active site" evidence="1">
    <location>
        <position position="191"/>
    </location>
</feature>
<feature type="active site" description="Proton acceptor" evidence="1">
    <location>
        <position position="193"/>
    </location>
</feature>
<feature type="active site" description="Nucleophile" evidence="1">
    <location>
        <position position="287"/>
    </location>
</feature>
<comment type="function">
    <text evidence="1">Together with AlgI and AlgF, forms an inner membrane complex which probably interacts with the alginate polymerization-transport complex and adds acetyl groups at the O-2 and O-3 positions of mannuronate residues. Acetylation of alginate is important for the architecture of biofilms and increases the ability of alginate to act as a defense barrier (By similarity).</text>
</comment>
<comment type="pathway">
    <text>Glycan biosynthesis; alginate biosynthesis.</text>
</comment>
<comment type="subcellular location">
    <subcellularLocation>
        <location evidence="1">Cell inner membrane</location>
        <topology evidence="1">Peripheral membrane protein</topology>
        <orientation evidence="1">Periplasmic side</orientation>
    </subcellularLocation>
    <subcellularLocation>
        <location evidence="1">Periplasm</location>
    </subcellularLocation>
</comment>
<comment type="similarity">
    <text evidence="3">Belongs to the AlgJ family.</text>
</comment>
<sequence length="394" mass="43952">MTRSLRVLYIGLFLVLLLALGAWSLRSFFGFSTNADATVLNGRWTKAVETHYDEEFPIKRLGTNLWAALDYKLFNEGRPGVVLGRDHWLYSDEEFNPAVNEDQNLEGNYALVEGVRQKLKAQGIQLVMAIVPAKVRLYPEHLGEVKPASIHANLYQDFHARVAADKIIAPDLLGPLQQAKLGGKQVFLRTDTHWTPDGAEIAAKQLAKTIADKTPLNGEPQRFVTEAEKTEPHKGDLRLFLPLDPLFENLMPPKEPLEKRVTHLAETKGDDALFSDSETPVALVGTSYSANPNWNFVGALKQALGSDVISYAEDGHGPILPMLSYLKSDDFKNNPPQVLIWEFPERYLPVNNEIGDADPSWVAQLKQAGSRQQNMALNTPVNHQKSETPDRAQN</sequence>
<gene>
    <name type="primary">algJ</name>
</gene>
<reference key="1">
    <citation type="journal article" date="2003" name="J. Bacteriol.">
        <title>The Pseudomonas fluorescens AlgG protein, but not its mannuronan C-5-epimerase activity, is needed for alginate polymer formation.</title>
        <authorList>
            <person name="Gimmestad M."/>
            <person name="Sletta H."/>
            <person name="Ertesvaag H."/>
            <person name="Bakkevig K."/>
            <person name="Jain S."/>
            <person name="Suh S.-J."/>
            <person name="Skjaak-Braek G."/>
            <person name="Ellingsen T.E."/>
            <person name="Ohman D.E."/>
            <person name="Valla S."/>
        </authorList>
    </citation>
    <scope>NUCLEOTIDE SEQUENCE [GENOMIC DNA]</scope>
    <source>
        <strain>ATCC 17397 / DSM 50091 / CIP 73.25 / NCIMB 10525 / 12</strain>
    </source>
</reference>
<proteinExistence type="inferred from homology"/>